<feature type="chain" id="PRO_0000139940" description="Ribonuclease PH">
    <location>
        <begin position="1"/>
        <end position="273"/>
    </location>
</feature>
<feature type="region of interest" description="Disordered" evidence="2">
    <location>
        <begin position="254"/>
        <end position="273"/>
    </location>
</feature>
<feature type="binding site" evidence="1">
    <location>
        <position position="86"/>
    </location>
    <ligand>
        <name>phosphate</name>
        <dbReference type="ChEBI" id="CHEBI:43474"/>
        <note>substrate</note>
    </ligand>
</feature>
<feature type="binding site" evidence="1">
    <location>
        <begin position="124"/>
        <end position="126"/>
    </location>
    <ligand>
        <name>phosphate</name>
        <dbReference type="ChEBI" id="CHEBI:43474"/>
        <note>substrate</note>
    </ligand>
</feature>
<name>RNPH_SYMTH</name>
<reference key="1">
    <citation type="journal article" date="2004" name="Nucleic Acids Res.">
        <title>Genome sequence of Symbiobacterium thermophilum, an uncultivable bacterium that depends on microbial commensalism.</title>
        <authorList>
            <person name="Ueda K."/>
            <person name="Yamashita A."/>
            <person name="Ishikawa J."/>
            <person name="Shimada M."/>
            <person name="Watsuji T."/>
            <person name="Morimura K."/>
            <person name="Ikeda H."/>
            <person name="Hattori M."/>
            <person name="Beppu T."/>
        </authorList>
    </citation>
    <scope>NUCLEOTIDE SEQUENCE [LARGE SCALE GENOMIC DNA]</scope>
    <source>
        <strain>DSM 24528 / JCM 14929 / IAM 14863 / T</strain>
    </source>
</reference>
<organism>
    <name type="scientific">Symbiobacterium thermophilum (strain DSM 24528 / JCM 14929 / IAM 14863 / T)</name>
    <dbReference type="NCBI Taxonomy" id="292459"/>
    <lineage>
        <taxon>Bacteria</taxon>
        <taxon>Bacillati</taxon>
        <taxon>Bacillota</taxon>
        <taxon>Clostridia</taxon>
        <taxon>Eubacteriales</taxon>
        <taxon>Symbiobacteriaceae</taxon>
        <taxon>Symbiobacterium</taxon>
    </lineage>
</organism>
<dbReference type="EC" id="2.7.7.56" evidence="1"/>
<dbReference type="EMBL" id="AP006840">
    <property type="protein sequence ID" value="BAD39328.1"/>
    <property type="molecule type" value="Genomic_DNA"/>
</dbReference>
<dbReference type="RefSeq" id="WP_011194477.1">
    <property type="nucleotide sequence ID" value="NC_006177.1"/>
</dbReference>
<dbReference type="SMR" id="Q67SL5"/>
<dbReference type="STRING" id="292459.STH343"/>
<dbReference type="KEGG" id="sth:STH343"/>
<dbReference type="eggNOG" id="COG0689">
    <property type="taxonomic scope" value="Bacteria"/>
</dbReference>
<dbReference type="HOGENOM" id="CLU_050858_0_0_9"/>
<dbReference type="OrthoDB" id="9807456at2"/>
<dbReference type="Proteomes" id="UP000000417">
    <property type="component" value="Chromosome"/>
</dbReference>
<dbReference type="GO" id="GO:0000175">
    <property type="term" value="F:3'-5'-RNA exonuclease activity"/>
    <property type="evidence" value="ECO:0007669"/>
    <property type="project" value="UniProtKB-UniRule"/>
</dbReference>
<dbReference type="GO" id="GO:0000049">
    <property type="term" value="F:tRNA binding"/>
    <property type="evidence" value="ECO:0007669"/>
    <property type="project" value="UniProtKB-UniRule"/>
</dbReference>
<dbReference type="GO" id="GO:0009022">
    <property type="term" value="F:tRNA nucleotidyltransferase activity"/>
    <property type="evidence" value="ECO:0007669"/>
    <property type="project" value="UniProtKB-UniRule"/>
</dbReference>
<dbReference type="GO" id="GO:0016075">
    <property type="term" value="P:rRNA catabolic process"/>
    <property type="evidence" value="ECO:0007669"/>
    <property type="project" value="UniProtKB-UniRule"/>
</dbReference>
<dbReference type="GO" id="GO:0006364">
    <property type="term" value="P:rRNA processing"/>
    <property type="evidence" value="ECO:0007669"/>
    <property type="project" value="UniProtKB-KW"/>
</dbReference>
<dbReference type="GO" id="GO:0008033">
    <property type="term" value="P:tRNA processing"/>
    <property type="evidence" value="ECO:0007669"/>
    <property type="project" value="UniProtKB-UniRule"/>
</dbReference>
<dbReference type="CDD" id="cd11362">
    <property type="entry name" value="RNase_PH_bact"/>
    <property type="match status" value="1"/>
</dbReference>
<dbReference type="FunFam" id="3.30.230.70:FF:000003">
    <property type="entry name" value="Ribonuclease PH"/>
    <property type="match status" value="1"/>
</dbReference>
<dbReference type="Gene3D" id="3.30.230.70">
    <property type="entry name" value="GHMP Kinase, N-terminal domain"/>
    <property type="match status" value="1"/>
</dbReference>
<dbReference type="HAMAP" id="MF_00564">
    <property type="entry name" value="RNase_PH"/>
    <property type="match status" value="1"/>
</dbReference>
<dbReference type="InterPro" id="IPR001247">
    <property type="entry name" value="ExoRNase_PH_dom1"/>
</dbReference>
<dbReference type="InterPro" id="IPR015847">
    <property type="entry name" value="ExoRNase_PH_dom2"/>
</dbReference>
<dbReference type="InterPro" id="IPR036345">
    <property type="entry name" value="ExoRNase_PH_dom2_sf"/>
</dbReference>
<dbReference type="InterPro" id="IPR027408">
    <property type="entry name" value="PNPase/RNase_PH_dom_sf"/>
</dbReference>
<dbReference type="InterPro" id="IPR020568">
    <property type="entry name" value="Ribosomal_Su5_D2-typ_SF"/>
</dbReference>
<dbReference type="InterPro" id="IPR050080">
    <property type="entry name" value="RNase_PH"/>
</dbReference>
<dbReference type="InterPro" id="IPR002381">
    <property type="entry name" value="RNase_PH_bac-type"/>
</dbReference>
<dbReference type="InterPro" id="IPR018336">
    <property type="entry name" value="RNase_PH_CS"/>
</dbReference>
<dbReference type="NCBIfam" id="TIGR01966">
    <property type="entry name" value="RNasePH"/>
    <property type="match status" value="1"/>
</dbReference>
<dbReference type="PANTHER" id="PTHR11953">
    <property type="entry name" value="EXOSOME COMPLEX COMPONENT"/>
    <property type="match status" value="1"/>
</dbReference>
<dbReference type="PANTHER" id="PTHR11953:SF0">
    <property type="entry name" value="EXOSOME COMPLEX COMPONENT RRP41"/>
    <property type="match status" value="1"/>
</dbReference>
<dbReference type="Pfam" id="PF01138">
    <property type="entry name" value="RNase_PH"/>
    <property type="match status" value="1"/>
</dbReference>
<dbReference type="Pfam" id="PF03725">
    <property type="entry name" value="RNase_PH_C"/>
    <property type="match status" value="1"/>
</dbReference>
<dbReference type="SUPFAM" id="SSF55666">
    <property type="entry name" value="Ribonuclease PH domain 2-like"/>
    <property type="match status" value="1"/>
</dbReference>
<dbReference type="SUPFAM" id="SSF54211">
    <property type="entry name" value="Ribosomal protein S5 domain 2-like"/>
    <property type="match status" value="1"/>
</dbReference>
<dbReference type="PROSITE" id="PS01277">
    <property type="entry name" value="RIBONUCLEASE_PH"/>
    <property type="match status" value="1"/>
</dbReference>
<gene>
    <name evidence="1" type="primary">rph</name>
    <name type="ordered locus">STH343</name>
</gene>
<comment type="function">
    <text evidence="1">Phosphorolytic 3'-5' exoribonuclease that plays an important role in tRNA 3'-end maturation. Removes nucleotide residues following the 3'-CCA terminus of tRNAs; can also add nucleotides to the ends of RNA molecules by using nucleoside diphosphates as substrates, but this may not be physiologically important. Probably plays a role in initiation of 16S rRNA degradation (leading to ribosome degradation) during starvation.</text>
</comment>
<comment type="catalytic activity">
    <reaction evidence="1">
        <text>tRNA(n+1) + phosphate = tRNA(n) + a ribonucleoside 5'-diphosphate</text>
        <dbReference type="Rhea" id="RHEA:10628"/>
        <dbReference type="Rhea" id="RHEA-COMP:17343"/>
        <dbReference type="Rhea" id="RHEA-COMP:17344"/>
        <dbReference type="ChEBI" id="CHEBI:43474"/>
        <dbReference type="ChEBI" id="CHEBI:57930"/>
        <dbReference type="ChEBI" id="CHEBI:173114"/>
        <dbReference type="EC" id="2.7.7.56"/>
    </reaction>
</comment>
<comment type="subunit">
    <text evidence="1">Homohexameric ring arranged as a trimer of dimers.</text>
</comment>
<comment type="similarity">
    <text evidence="1">Belongs to the RNase PH family.</text>
</comment>
<sequence>MRQDGRLPHEMRPVRITRHYNIHAEGSVLIEVGRTRVICTATLEDRVPPFLRGRGEGWITAEYGMLPRATGQRTAREAARGRQGGRTMEIQRLIGRALRSVIDLAALGERTLIIDCDVIQADGGTRTASITGAYVAMVDALAGLRAAGLIDRLPVKDYLAATSVGVVGGVPVLDLTYEEDSRAAVDLNLVMTGSGEVVEIQGTGEERPFTRRELEELLALAESGVRRLVALQREQLGPLGVEVGAVVTEASGIGHQEPGEGAGVSLAPGGGGL</sequence>
<keyword id="KW-0548">Nucleotidyltransferase</keyword>
<keyword id="KW-1185">Reference proteome</keyword>
<keyword id="KW-0694">RNA-binding</keyword>
<keyword id="KW-0698">rRNA processing</keyword>
<keyword id="KW-0808">Transferase</keyword>
<keyword id="KW-0819">tRNA processing</keyword>
<keyword id="KW-0820">tRNA-binding</keyword>
<accession>Q67SL5</accession>
<protein>
    <recommendedName>
        <fullName evidence="1">Ribonuclease PH</fullName>
        <shortName evidence="1">RNase PH</shortName>
        <ecNumber evidence="1">2.7.7.56</ecNumber>
    </recommendedName>
    <alternativeName>
        <fullName evidence="1">tRNA nucleotidyltransferase</fullName>
    </alternativeName>
</protein>
<proteinExistence type="inferred from homology"/>
<evidence type="ECO:0000255" key="1">
    <source>
        <dbReference type="HAMAP-Rule" id="MF_00564"/>
    </source>
</evidence>
<evidence type="ECO:0000256" key="2">
    <source>
        <dbReference type="SAM" id="MobiDB-lite"/>
    </source>
</evidence>